<comment type="function">
    <text evidence="1">This protein is located at the 30S-50S ribosomal subunit interface and may play a role in the structure and function of the aminoacyl-tRNA binding site.</text>
</comment>
<comment type="similarity">
    <text evidence="1">Belongs to the bacterial ribosomal protein bL19 family.</text>
</comment>
<name>RL19_ALLAM</name>
<accession>B9JUC8</accession>
<keyword id="KW-1185">Reference proteome</keyword>
<keyword id="KW-0687">Ribonucleoprotein</keyword>
<keyword id="KW-0689">Ribosomal protein</keyword>
<evidence type="ECO:0000255" key="1">
    <source>
        <dbReference type="HAMAP-Rule" id="MF_00402"/>
    </source>
</evidence>
<evidence type="ECO:0000305" key="2"/>
<protein>
    <recommendedName>
        <fullName evidence="1">Large ribosomal subunit protein bL19</fullName>
    </recommendedName>
    <alternativeName>
        <fullName evidence="2">50S ribosomal protein L19</fullName>
    </alternativeName>
</protein>
<gene>
    <name evidence="1" type="primary">rplS</name>
    <name type="ordered locus">Avi_4210</name>
</gene>
<proteinExistence type="inferred from homology"/>
<sequence>MNIIQQLEAEQAATIEAKRTLPEFSPGDTLRVNVRVTEGNRTRVQAYEGVCIARSGGSINESFTVRKISYGEGVERVFPVYSPLVESVEVVRRGKVRRAKLYYLRDRRGKSARIVENTGTRARKLNDSERAALAEEKARLEAEKVAAAQALAAEKAAAEAAEKAAAAEAEAAKAAEGSAE</sequence>
<reference key="1">
    <citation type="journal article" date="2009" name="J. Bacteriol.">
        <title>Genome sequences of three Agrobacterium biovars help elucidate the evolution of multichromosome genomes in bacteria.</title>
        <authorList>
            <person name="Slater S.C."/>
            <person name="Goldman B.S."/>
            <person name="Goodner B."/>
            <person name="Setubal J.C."/>
            <person name="Farrand S.K."/>
            <person name="Nester E.W."/>
            <person name="Burr T.J."/>
            <person name="Banta L."/>
            <person name="Dickerman A.W."/>
            <person name="Paulsen I."/>
            <person name="Otten L."/>
            <person name="Suen G."/>
            <person name="Welch R."/>
            <person name="Almeida N.F."/>
            <person name="Arnold F."/>
            <person name="Burton O.T."/>
            <person name="Du Z."/>
            <person name="Ewing A."/>
            <person name="Godsy E."/>
            <person name="Heisel S."/>
            <person name="Houmiel K.L."/>
            <person name="Jhaveri J."/>
            <person name="Lu J."/>
            <person name="Miller N.M."/>
            <person name="Norton S."/>
            <person name="Chen Q."/>
            <person name="Phoolcharoen W."/>
            <person name="Ohlin V."/>
            <person name="Ondrusek D."/>
            <person name="Pride N."/>
            <person name="Stricklin S.L."/>
            <person name="Sun J."/>
            <person name="Wheeler C."/>
            <person name="Wilson L."/>
            <person name="Zhu H."/>
            <person name="Wood D.W."/>
        </authorList>
    </citation>
    <scope>NUCLEOTIDE SEQUENCE [LARGE SCALE GENOMIC DNA]</scope>
    <source>
        <strain>ATCC BAA-846 / DSM 112012 / S4</strain>
    </source>
</reference>
<dbReference type="EMBL" id="CP000633">
    <property type="protein sequence ID" value="ACM38051.1"/>
    <property type="molecule type" value="Genomic_DNA"/>
</dbReference>
<dbReference type="RefSeq" id="WP_015917462.1">
    <property type="nucleotide sequence ID" value="NC_011989.1"/>
</dbReference>
<dbReference type="SMR" id="B9JUC8"/>
<dbReference type="STRING" id="311402.Avi_4210"/>
<dbReference type="KEGG" id="avi:Avi_4210"/>
<dbReference type="eggNOG" id="COG0335">
    <property type="taxonomic scope" value="Bacteria"/>
</dbReference>
<dbReference type="HOGENOM" id="CLU_103507_0_2_5"/>
<dbReference type="Proteomes" id="UP000001596">
    <property type="component" value="Chromosome 1"/>
</dbReference>
<dbReference type="GO" id="GO:0022625">
    <property type="term" value="C:cytosolic large ribosomal subunit"/>
    <property type="evidence" value="ECO:0007669"/>
    <property type="project" value="TreeGrafter"/>
</dbReference>
<dbReference type="GO" id="GO:0003735">
    <property type="term" value="F:structural constituent of ribosome"/>
    <property type="evidence" value="ECO:0007669"/>
    <property type="project" value="InterPro"/>
</dbReference>
<dbReference type="GO" id="GO:0006412">
    <property type="term" value="P:translation"/>
    <property type="evidence" value="ECO:0007669"/>
    <property type="project" value="UniProtKB-UniRule"/>
</dbReference>
<dbReference type="FunFam" id="2.30.30.790:FF:000001">
    <property type="entry name" value="50S ribosomal protein L19"/>
    <property type="match status" value="1"/>
</dbReference>
<dbReference type="Gene3D" id="2.30.30.790">
    <property type="match status" value="1"/>
</dbReference>
<dbReference type="HAMAP" id="MF_00402">
    <property type="entry name" value="Ribosomal_bL19"/>
    <property type="match status" value="1"/>
</dbReference>
<dbReference type="InterPro" id="IPR001857">
    <property type="entry name" value="Ribosomal_bL19"/>
</dbReference>
<dbReference type="InterPro" id="IPR018257">
    <property type="entry name" value="Ribosomal_bL19_CS"/>
</dbReference>
<dbReference type="InterPro" id="IPR038657">
    <property type="entry name" value="Ribosomal_bL19_sf"/>
</dbReference>
<dbReference type="InterPro" id="IPR008991">
    <property type="entry name" value="Translation_prot_SH3-like_sf"/>
</dbReference>
<dbReference type="NCBIfam" id="TIGR01024">
    <property type="entry name" value="rplS_bact"/>
    <property type="match status" value="1"/>
</dbReference>
<dbReference type="PANTHER" id="PTHR15680:SF9">
    <property type="entry name" value="LARGE RIBOSOMAL SUBUNIT PROTEIN BL19M"/>
    <property type="match status" value="1"/>
</dbReference>
<dbReference type="PANTHER" id="PTHR15680">
    <property type="entry name" value="RIBOSOMAL PROTEIN L19"/>
    <property type="match status" value="1"/>
</dbReference>
<dbReference type="Pfam" id="PF01245">
    <property type="entry name" value="Ribosomal_L19"/>
    <property type="match status" value="1"/>
</dbReference>
<dbReference type="PRINTS" id="PR00061">
    <property type="entry name" value="RIBOSOMALL19"/>
</dbReference>
<dbReference type="SUPFAM" id="SSF50104">
    <property type="entry name" value="Translation proteins SH3-like domain"/>
    <property type="match status" value="1"/>
</dbReference>
<dbReference type="PROSITE" id="PS01015">
    <property type="entry name" value="RIBOSOMAL_L19"/>
    <property type="match status" value="1"/>
</dbReference>
<feature type="chain" id="PRO_1000205879" description="Large ribosomal subunit protein bL19">
    <location>
        <begin position="1"/>
        <end position="180"/>
    </location>
</feature>
<organism>
    <name type="scientific">Allorhizobium ampelinum (strain ATCC BAA-846 / DSM 112012 / S4)</name>
    <name type="common">Agrobacterium vitis (strain S4)</name>
    <dbReference type="NCBI Taxonomy" id="311402"/>
    <lineage>
        <taxon>Bacteria</taxon>
        <taxon>Pseudomonadati</taxon>
        <taxon>Pseudomonadota</taxon>
        <taxon>Alphaproteobacteria</taxon>
        <taxon>Hyphomicrobiales</taxon>
        <taxon>Rhizobiaceae</taxon>
        <taxon>Rhizobium/Agrobacterium group</taxon>
        <taxon>Allorhizobium</taxon>
        <taxon>Allorhizobium ampelinum</taxon>
    </lineage>
</organism>